<name>RS11_MYCSS</name>
<comment type="function">
    <text evidence="1">Located on the platform of the 30S subunit, it bridges several disparate RNA helices of the 16S rRNA. Forms part of the Shine-Dalgarno cleft in the 70S ribosome.</text>
</comment>
<comment type="subunit">
    <text evidence="1">Part of the 30S ribosomal subunit. Interacts with proteins S7 and S18. Binds to IF-3.</text>
</comment>
<comment type="similarity">
    <text evidence="1">Belongs to the universal ribosomal protein uS11 family.</text>
</comment>
<dbReference type="EMBL" id="CP000384">
    <property type="protein sequence ID" value="ABG07224.1"/>
    <property type="molecule type" value="Genomic_DNA"/>
</dbReference>
<dbReference type="SMR" id="Q1BD10"/>
<dbReference type="KEGG" id="mmc:Mmcs_1111"/>
<dbReference type="HOGENOM" id="CLU_072439_5_0_11"/>
<dbReference type="BioCyc" id="MSP164756:G1G6O-1137-MONOMER"/>
<dbReference type="GO" id="GO:1990904">
    <property type="term" value="C:ribonucleoprotein complex"/>
    <property type="evidence" value="ECO:0007669"/>
    <property type="project" value="UniProtKB-KW"/>
</dbReference>
<dbReference type="GO" id="GO:0005840">
    <property type="term" value="C:ribosome"/>
    <property type="evidence" value="ECO:0007669"/>
    <property type="project" value="UniProtKB-KW"/>
</dbReference>
<dbReference type="GO" id="GO:0019843">
    <property type="term" value="F:rRNA binding"/>
    <property type="evidence" value="ECO:0007669"/>
    <property type="project" value="UniProtKB-UniRule"/>
</dbReference>
<dbReference type="GO" id="GO:0003735">
    <property type="term" value="F:structural constituent of ribosome"/>
    <property type="evidence" value="ECO:0007669"/>
    <property type="project" value="InterPro"/>
</dbReference>
<dbReference type="GO" id="GO:0006412">
    <property type="term" value="P:translation"/>
    <property type="evidence" value="ECO:0007669"/>
    <property type="project" value="UniProtKB-UniRule"/>
</dbReference>
<dbReference type="FunFam" id="3.30.420.80:FF:000001">
    <property type="entry name" value="30S ribosomal protein S11"/>
    <property type="match status" value="1"/>
</dbReference>
<dbReference type="Gene3D" id="3.30.420.80">
    <property type="entry name" value="Ribosomal protein S11"/>
    <property type="match status" value="1"/>
</dbReference>
<dbReference type="HAMAP" id="MF_01310">
    <property type="entry name" value="Ribosomal_uS11"/>
    <property type="match status" value="1"/>
</dbReference>
<dbReference type="InterPro" id="IPR001971">
    <property type="entry name" value="Ribosomal_uS11"/>
</dbReference>
<dbReference type="InterPro" id="IPR019981">
    <property type="entry name" value="Ribosomal_uS11_bac-type"/>
</dbReference>
<dbReference type="InterPro" id="IPR018102">
    <property type="entry name" value="Ribosomal_uS11_CS"/>
</dbReference>
<dbReference type="InterPro" id="IPR036967">
    <property type="entry name" value="Ribosomal_uS11_sf"/>
</dbReference>
<dbReference type="NCBIfam" id="NF003698">
    <property type="entry name" value="PRK05309.1"/>
    <property type="match status" value="1"/>
</dbReference>
<dbReference type="NCBIfam" id="TIGR03632">
    <property type="entry name" value="uS11_bact"/>
    <property type="match status" value="1"/>
</dbReference>
<dbReference type="PANTHER" id="PTHR11759">
    <property type="entry name" value="40S RIBOSOMAL PROTEIN S14/30S RIBOSOMAL PROTEIN S11"/>
    <property type="match status" value="1"/>
</dbReference>
<dbReference type="Pfam" id="PF00411">
    <property type="entry name" value="Ribosomal_S11"/>
    <property type="match status" value="1"/>
</dbReference>
<dbReference type="PIRSF" id="PIRSF002131">
    <property type="entry name" value="Ribosomal_S11"/>
    <property type="match status" value="1"/>
</dbReference>
<dbReference type="SUPFAM" id="SSF53137">
    <property type="entry name" value="Translational machinery components"/>
    <property type="match status" value="1"/>
</dbReference>
<dbReference type="PROSITE" id="PS00054">
    <property type="entry name" value="RIBOSOMAL_S11"/>
    <property type="match status" value="1"/>
</dbReference>
<gene>
    <name evidence="1" type="primary">rpsK</name>
    <name type="ordered locus">Mmcs_1111</name>
</gene>
<accession>Q1BD10</accession>
<protein>
    <recommendedName>
        <fullName evidence="1">Small ribosomal subunit protein uS11</fullName>
    </recommendedName>
    <alternativeName>
        <fullName evidence="3">30S ribosomal protein S11</fullName>
    </alternativeName>
</protein>
<sequence>MPPKKAAASSAKKGQKTRRREKKNVPHGAAHIKSTFNNTIVSITDPQGNVIAWASSGHVGFKGSRKSTPFAAQLAAENAARKAQEHGVKKVDVFVKGPGSGRETAIRSLQAAGLEVGAIADVTPQPHNGCRPPKRRRV</sequence>
<feature type="chain" id="PRO_0000294799" description="Small ribosomal subunit protein uS11">
    <location>
        <begin position="1"/>
        <end position="138"/>
    </location>
</feature>
<feature type="region of interest" description="Disordered" evidence="2">
    <location>
        <begin position="1"/>
        <end position="28"/>
    </location>
</feature>
<feature type="compositionally biased region" description="Low complexity" evidence="2">
    <location>
        <begin position="1"/>
        <end position="12"/>
    </location>
</feature>
<feature type="compositionally biased region" description="Basic residues" evidence="2">
    <location>
        <begin position="13"/>
        <end position="22"/>
    </location>
</feature>
<evidence type="ECO:0000255" key="1">
    <source>
        <dbReference type="HAMAP-Rule" id="MF_01310"/>
    </source>
</evidence>
<evidence type="ECO:0000256" key="2">
    <source>
        <dbReference type="SAM" id="MobiDB-lite"/>
    </source>
</evidence>
<evidence type="ECO:0000305" key="3"/>
<reference key="1">
    <citation type="submission" date="2006-06" db="EMBL/GenBank/DDBJ databases">
        <title>Complete sequence of chromosome of Mycobacterium sp. MCS.</title>
        <authorList>
            <consortium name="US DOE Joint Genome Institute"/>
            <person name="Copeland A."/>
            <person name="Lucas S."/>
            <person name="Lapidus A."/>
            <person name="Barry K."/>
            <person name="Detter J.C."/>
            <person name="Glavina del Rio T."/>
            <person name="Hammon N."/>
            <person name="Israni S."/>
            <person name="Dalin E."/>
            <person name="Tice H."/>
            <person name="Pitluck S."/>
            <person name="Martinez M."/>
            <person name="Schmutz J."/>
            <person name="Larimer F."/>
            <person name="Land M."/>
            <person name="Hauser L."/>
            <person name="Kyrpides N."/>
            <person name="Kim E."/>
            <person name="Miller C.D."/>
            <person name="Hughes J.E."/>
            <person name="Anderson A.J."/>
            <person name="Sims R.C."/>
            <person name="Richardson P."/>
        </authorList>
    </citation>
    <scope>NUCLEOTIDE SEQUENCE [LARGE SCALE GENOMIC DNA]</scope>
    <source>
        <strain>MCS</strain>
    </source>
</reference>
<organism>
    <name type="scientific">Mycobacterium sp. (strain MCS)</name>
    <dbReference type="NCBI Taxonomy" id="164756"/>
    <lineage>
        <taxon>Bacteria</taxon>
        <taxon>Bacillati</taxon>
        <taxon>Actinomycetota</taxon>
        <taxon>Actinomycetes</taxon>
        <taxon>Mycobacteriales</taxon>
        <taxon>Mycobacteriaceae</taxon>
        <taxon>Mycobacterium</taxon>
    </lineage>
</organism>
<keyword id="KW-0687">Ribonucleoprotein</keyword>
<keyword id="KW-0689">Ribosomal protein</keyword>
<keyword id="KW-0694">RNA-binding</keyword>
<keyword id="KW-0699">rRNA-binding</keyword>
<proteinExistence type="inferred from homology"/>